<protein>
    <recommendedName>
        <fullName evidence="1">Holo-[acyl-carrier-protein] synthase</fullName>
        <shortName evidence="1">Holo-ACP synthase</shortName>
        <ecNumber evidence="1">2.7.8.7</ecNumber>
    </recommendedName>
    <alternativeName>
        <fullName evidence="1">4'-phosphopantetheinyl transferase AcpS</fullName>
    </alternativeName>
</protein>
<comment type="function">
    <text evidence="1">Transfers the 4'-phosphopantetheine moiety from coenzyme A to a Ser of acyl-carrier-protein.</text>
</comment>
<comment type="catalytic activity">
    <reaction evidence="1">
        <text>apo-[ACP] + CoA = holo-[ACP] + adenosine 3',5'-bisphosphate + H(+)</text>
        <dbReference type="Rhea" id="RHEA:12068"/>
        <dbReference type="Rhea" id="RHEA-COMP:9685"/>
        <dbReference type="Rhea" id="RHEA-COMP:9690"/>
        <dbReference type="ChEBI" id="CHEBI:15378"/>
        <dbReference type="ChEBI" id="CHEBI:29999"/>
        <dbReference type="ChEBI" id="CHEBI:57287"/>
        <dbReference type="ChEBI" id="CHEBI:58343"/>
        <dbReference type="ChEBI" id="CHEBI:64479"/>
        <dbReference type="EC" id="2.7.8.7"/>
    </reaction>
</comment>
<comment type="cofactor">
    <cofactor evidence="1">
        <name>Mg(2+)</name>
        <dbReference type="ChEBI" id="CHEBI:18420"/>
    </cofactor>
</comment>
<comment type="subcellular location">
    <subcellularLocation>
        <location evidence="1">Cytoplasm</location>
    </subcellularLocation>
</comment>
<comment type="similarity">
    <text evidence="1">Belongs to the P-Pant transferase superfamily. AcpS family.</text>
</comment>
<feature type="chain" id="PRO_1000008528" description="Holo-[acyl-carrier-protein] synthase">
    <location>
        <begin position="1"/>
        <end position="126"/>
    </location>
</feature>
<feature type="binding site" evidence="1">
    <location>
        <position position="9"/>
    </location>
    <ligand>
        <name>Mg(2+)</name>
        <dbReference type="ChEBI" id="CHEBI:18420"/>
    </ligand>
</feature>
<feature type="binding site" evidence="1">
    <location>
        <position position="58"/>
    </location>
    <ligand>
        <name>Mg(2+)</name>
        <dbReference type="ChEBI" id="CHEBI:18420"/>
    </ligand>
</feature>
<gene>
    <name evidence="1" type="primary">acpS</name>
    <name type="ordered locus">YPDSF_1549</name>
</gene>
<evidence type="ECO:0000255" key="1">
    <source>
        <dbReference type="HAMAP-Rule" id="MF_00101"/>
    </source>
</evidence>
<proteinExistence type="inferred from homology"/>
<reference key="1">
    <citation type="submission" date="2007-02" db="EMBL/GenBank/DDBJ databases">
        <title>Complete sequence of chromosome of Yersinia pestis Pestoides F.</title>
        <authorList>
            <consortium name="US DOE Joint Genome Institute"/>
            <person name="Copeland A."/>
            <person name="Lucas S."/>
            <person name="Lapidus A."/>
            <person name="Barry K."/>
            <person name="Detter J.C."/>
            <person name="Glavina del Rio T."/>
            <person name="Hammon N."/>
            <person name="Israni S."/>
            <person name="Dalin E."/>
            <person name="Tice H."/>
            <person name="Pitluck S."/>
            <person name="Di Bartolo G."/>
            <person name="Chain P."/>
            <person name="Malfatti S."/>
            <person name="Shin M."/>
            <person name="Vergez L."/>
            <person name="Schmutz J."/>
            <person name="Larimer F."/>
            <person name="Land M."/>
            <person name="Hauser L."/>
            <person name="Worsham P."/>
            <person name="Chu M."/>
            <person name="Bearden S."/>
            <person name="Garcia E."/>
            <person name="Richardson P."/>
        </authorList>
    </citation>
    <scope>NUCLEOTIDE SEQUENCE [LARGE SCALE GENOMIC DNA]</scope>
    <source>
        <strain>Pestoides F</strain>
    </source>
</reference>
<sequence length="126" mass="13992">MAILGLGTDIVEISRIQAVVERTGERLARRILSPSEWQHYQQHQQPVRFLAKRFAVKEAAAKAFGTGIRNGLAFNQFEVVNDALGKPTLRLHSRAAELAVELGVKSLHVTLADERRYACATVIIES</sequence>
<keyword id="KW-0963">Cytoplasm</keyword>
<keyword id="KW-0275">Fatty acid biosynthesis</keyword>
<keyword id="KW-0276">Fatty acid metabolism</keyword>
<keyword id="KW-0444">Lipid biosynthesis</keyword>
<keyword id="KW-0443">Lipid metabolism</keyword>
<keyword id="KW-0460">Magnesium</keyword>
<keyword id="KW-0479">Metal-binding</keyword>
<keyword id="KW-0808">Transferase</keyword>
<accession>A4TKX4</accession>
<dbReference type="EC" id="2.7.8.7" evidence="1"/>
<dbReference type="EMBL" id="CP000668">
    <property type="protein sequence ID" value="ABP39936.1"/>
    <property type="molecule type" value="Genomic_DNA"/>
</dbReference>
<dbReference type="RefSeq" id="WP_002211568.1">
    <property type="nucleotide sequence ID" value="NZ_CP009715.1"/>
</dbReference>
<dbReference type="SMR" id="A4TKX4"/>
<dbReference type="GeneID" id="57975883"/>
<dbReference type="KEGG" id="ypp:YPDSF_1549"/>
<dbReference type="PATRIC" id="fig|386656.14.peg.2222"/>
<dbReference type="GO" id="GO:0005737">
    <property type="term" value="C:cytoplasm"/>
    <property type="evidence" value="ECO:0007669"/>
    <property type="project" value="UniProtKB-SubCell"/>
</dbReference>
<dbReference type="GO" id="GO:0008897">
    <property type="term" value="F:holo-[acyl-carrier-protein] synthase activity"/>
    <property type="evidence" value="ECO:0007669"/>
    <property type="project" value="UniProtKB-UniRule"/>
</dbReference>
<dbReference type="GO" id="GO:0000287">
    <property type="term" value="F:magnesium ion binding"/>
    <property type="evidence" value="ECO:0007669"/>
    <property type="project" value="UniProtKB-UniRule"/>
</dbReference>
<dbReference type="GO" id="GO:0006633">
    <property type="term" value="P:fatty acid biosynthetic process"/>
    <property type="evidence" value="ECO:0007669"/>
    <property type="project" value="UniProtKB-UniRule"/>
</dbReference>
<dbReference type="FunFam" id="3.90.470.20:FF:000001">
    <property type="entry name" value="Holo-[acyl-carrier-protein] synthase"/>
    <property type="match status" value="1"/>
</dbReference>
<dbReference type="Gene3D" id="3.90.470.20">
    <property type="entry name" value="4'-phosphopantetheinyl transferase domain"/>
    <property type="match status" value="1"/>
</dbReference>
<dbReference type="HAMAP" id="MF_00101">
    <property type="entry name" value="AcpS"/>
    <property type="match status" value="1"/>
</dbReference>
<dbReference type="InterPro" id="IPR008278">
    <property type="entry name" value="4-PPantetheinyl_Trfase_dom"/>
</dbReference>
<dbReference type="InterPro" id="IPR037143">
    <property type="entry name" value="4-PPantetheinyl_Trfase_dom_sf"/>
</dbReference>
<dbReference type="InterPro" id="IPR002582">
    <property type="entry name" value="ACPS"/>
</dbReference>
<dbReference type="InterPro" id="IPR004568">
    <property type="entry name" value="Ppantetheine-prot_Trfase_dom"/>
</dbReference>
<dbReference type="NCBIfam" id="TIGR00516">
    <property type="entry name" value="acpS"/>
    <property type="match status" value="1"/>
</dbReference>
<dbReference type="NCBIfam" id="TIGR00556">
    <property type="entry name" value="pantethn_trn"/>
    <property type="match status" value="1"/>
</dbReference>
<dbReference type="Pfam" id="PF01648">
    <property type="entry name" value="ACPS"/>
    <property type="match status" value="1"/>
</dbReference>
<dbReference type="SUPFAM" id="SSF56214">
    <property type="entry name" value="4'-phosphopantetheinyl transferase"/>
    <property type="match status" value="1"/>
</dbReference>
<organism>
    <name type="scientific">Yersinia pestis (strain Pestoides F)</name>
    <dbReference type="NCBI Taxonomy" id="386656"/>
    <lineage>
        <taxon>Bacteria</taxon>
        <taxon>Pseudomonadati</taxon>
        <taxon>Pseudomonadota</taxon>
        <taxon>Gammaproteobacteria</taxon>
        <taxon>Enterobacterales</taxon>
        <taxon>Yersiniaceae</taxon>
        <taxon>Yersinia</taxon>
    </lineage>
</organism>
<name>ACPS_YERPP</name>